<gene>
    <name type="primary">STP3</name>
    <name type="synonym">STP1</name>
    <name type="ordered locus">CAALFM_C304580CA</name>
    <name type="ORF">CaO19.13338</name>
    <name type="ORF">CaO19.5917</name>
</gene>
<evidence type="ECO:0000250" key="1"/>
<evidence type="ECO:0000255" key="2">
    <source>
        <dbReference type="PROSITE-ProRule" id="PRU00042"/>
    </source>
</evidence>
<evidence type="ECO:0000256" key="3">
    <source>
        <dbReference type="SAM" id="MobiDB-lite"/>
    </source>
</evidence>
<evidence type="ECO:0000269" key="4">
    <source>
    </source>
</evidence>
<evidence type="ECO:0000269" key="5">
    <source>
    </source>
</evidence>
<evidence type="ECO:0000269" key="6">
    <source>
    </source>
</evidence>
<dbReference type="EMBL" id="CP017625">
    <property type="protein sequence ID" value="AOW28476.1"/>
    <property type="molecule type" value="Genomic_DNA"/>
</dbReference>
<dbReference type="RefSeq" id="XP_723130.1">
    <property type="nucleotide sequence ID" value="XM_718037.1"/>
</dbReference>
<dbReference type="STRING" id="237561.Q5ANI6"/>
<dbReference type="EnsemblFungi" id="C3_04580C_A-T">
    <property type="protein sequence ID" value="C3_04580C_A-T-p1"/>
    <property type="gene ID" value="C3_04580C_A"/>
</dbReference>
<dbReference type="GeneID" id="3635152"/>
<dbReference type="KEGG" id="cal:CAALFM_C304580CA"/>
<dbReference type="CGD" id="CAL0000188272">
    <property type="gene designation" value="STP1"/>
</dbReference>
<dbReference type="VEuPathDB" id="FungiDB:C3_04580C_A"/>
<dbReference type="eggNOG" id="ENOG502S4NK">
    <property type="taxonomic scope" value="Eukaryota"/>
</dbReference>
<dbReference type="HOGENOM" id="CLU_036916_0_0_1"/>
<dbReference type="InParanoid" id="Q5ANI6"/>
<dbReference type="OMA" id="IFPVNCA"/>
<dbReference type="OrthoDB" id="9439903at2759"/>
<dbReference type="PHI-base" id="PHI:11403"/>
<dbReference type="PRO" id="PR:Q5ANI6"/>
<dbReference type="Proteomes" id="UP000000559">
    <property type="component" value="Chromosome 3"/>
</dbReference>
<dbReference type="GO" id="GO:0005737">
    <property type="term" value="C:cytoplasm"/>
    <property type="evidence" value="ECO:0000250"/>
    <property type="project" value="CGD"/>
</dbReference>
<dbReference type="GO" id="GO:0005634">
    <property type="term" value="C:nucleus"/>
    <property type="evidence" value="ECO:0000250"/>
    <property type="project" value="CGD"/>
</dbReference>
<dbReference type="GO" id="GO:0005886">
    <property type="term" value="C:plasma membrane"/>
    <property type="evidence" value="ECO:0007669"/>
    <property type="project" value="UniProtKB-SubCell"/>
</dbReference>
<dbReference type="GO" id="GO:0003677">
    <property type="term" value="F:DNA binding"/>
    <property type="evidence" value="ECO:0007669"/>
    <property type="project" value="UniProtKB-KW"/>
</dbReference>
<dbReference type="GO" id="GO:0003700">
    <property type="term" value="F:DNA-binding transcription factor activity"/>
    <property type="evidence" value="ECO:0000315"/>
    <property type="project" value="CGD"/>
</dbReference>
<dbReference type="GO" id="GO:0008270">
    <property type="term" value="F:zinc ion binding"/>
    <property type="evidence" value="ECO:0007669"/>
    <property type="project" value="UniProtKB-KW"/>
</dbReference>
<dbReference type="GO" id="GO:0044182">
    <property type="term" value="P:filamentous growth of a population of unicellular organisms"/>
    <property type="evidence" value="ECO:0000315"/>
    <property type="project" value="CGD"/>
</dbReference>
<dbReference type="GO" id="GO:0045944">
    <property type="term" value="P:positive regulation of transcription by RNA polymerase II"/>
    <property type="evidence" value="ECO:0000315"/>
    <property type="project" value="CGD"/>
</dbReference>
<dbReference type="FunFam" id="3.30.160.60:FF:002194">
    <property type="entry name" value="STP1p Transcription factor"/>
    <property type="match status" value="1"/>
</dbReference>
<dbReference type="Gene3D" id="3.30.160.60">
    <property type="entry name" value="Classic Zinc Finger"/>
    <property type="match status" value="1"/>
</dbReference>
<dbReference type="InterPro" id="IPR051643">
    <property type="entry name" value="Transcr_Reg_ZincFinger"/>
</dbReference>
<dbReference type="InterPro" id="IPR036236">
    <property type="entry name" value="Znf_C2H2_sf"/>
</dbReference>
<dbReference type="InterPro" id="IPR013087">
    <property type="entry name" value="Znf_C2H2_type"/>
</dbReference>
<dbReference type="PANTHER" id="PTHR24396:SF19">
    <property type="entry name" value="FI01119P"/>
    <property type="match status" value="1"/>
</dbReference>
<dbReference type="PANTHER" id="PTHR24396">
    <property type="entry name" value="ZINC FINGER PROTEIN"/>
    <property type="match status" value="1"/>
</dbReference>
<dbReference type="Pfam" id="PF00096">
    <property type="entry name" value="zf-C2H2"/>
    <property type="match status" value="1"/>
</dbReference>
<dbReference type="SUPFAM" id="SSF57667">
    <property type="entry name" value="beta-beta-alpha zinc fingers"/>
    <property type="match status" value="1"/>
</dbReference>
<dbReference type="PROSITE" id="PS00028">
    <property type="entry name" value="ZINC_FINGER_C2H2_1"/>
    <property type="match status" value="1"/>
</dbReference>
<dbReference type="PROSITE" id="PS50157">
    <property type="entry name" value="ZINC_FINGER_C2H2_2"/>
    <property type="match status" value="1"/>
</dbReference>
<sequence>MLILSIGLIHHTSNKSLYTISPNKGKRYEPFTTTSLGNFQFHVVRFLHRLIYGTQRYQELFPPIQKIKNINNVKQQRIFPVNCAADDLDLGFGESDQIELFNHPSKDTYGQFNLIQLIDIFDPPQVHAPSSADEFFKSNKGSEHIDIFDMITRQPPPFHQHQLNIETPYFEDFATPLVLPPHEVSSDDVESYFSGSVSTVSSIEPLDDEFVPPPQPPRTHTSRKRKHDSISPPASSDSSSSSSYVPQLIPSSSSSVTSNGDSPVSPTTKRKYTKKKQPVFSNVDEPIVITTTTKTNNIDVKKITTTKNGTVENRFDCPSCDASFKVKGYLTRHLKKHSTSKAFECPFFDNHGVHGSKCHPTGGFSRRDTFKVHLRALHFIYPAGVKASQRNSFNGRCAGCFQYFDNNSEWLENHIEAGKCTGTVQYKQNVSNLLLD</sequence>
<proteinExistence type="evidence at protein level"/>
<name>STP3_CANAL</name>
<accession>Q5ANI6</accession>
<accession>A0A1D8PJZ4</accession>
<reference key="1">
    <citation type="journal article" date="2004" name="Proc. Natl. Acad. Sci. U.S.A.">
        <title>The diploid genome sequence of Candida albicans.</title>
        <authorList>
            <person name="Jones T."/>
            <person name="Federspiel N.A."/>
            <person name="Chibana H."/>
            <person name="Dungan J."/>
            <person name="Kalman S."/>
            <person name="Magee B.B."/>
            <person name="Newport G."/>
            <person name="Thorstenson Y.R."/>
            <person name="Agabian N."/>
            <person name="Magee P.T."/>
            <person name="Davis R.W."/>
            <person name="Scherer S."/>
        </authorList>
    </citation>
    <scope>NUCLEOTIDE SEQUENCE [LARGE SCALE GENOMIC DNA]</scope>
    <source>
        <strain>SC5314 / ATCC MYA-2876</strain>
    </source>
</reference>
<reference key="2">
    <citation type="journal article" date="2007" name="Genome Biol.">
        <title>Assembly of the Candida albicans genome into sixteen supercontigs aligned on the eight chromosomes.</title>
        <authorList>
            <person name="van het Hoog M."/>
            <person name="Rast T.J."/>
            <person name="Martchenko M."/>
            <person name="Grindle S."/>
            <person name="Dignard D."/>
            <person name="Hogues H."/>
            <person name="Cuomo C."/>
            <person name="Berriman M."/>
            <person name="Scherer S."/>
            <person name="Magee B.B."/>
            <person name="Whiteway M."/>
            <person name="Chibana H."/>
            <person name="Nantel A."/>
            <person name="Magee P.T."/>
        </authorList>
    </citation>
    <scope>GENOME REANNOTATION</scope>
    <source>
        <strain>SC5314 / ATCC MYA-2876</strain>
    </source>
</reference>
<reference key="3">
    <citation type="journal article" date="2013" name="Genome Biol.">
        <title>Assembly of a phased diploid Candida albicans genome facilitates allele-specific measurements and provides a simple model for repeat and indel structure.</title>
        <authorList>
            <person name="Muzzey D."/>
            <person name="Schwartz K."/>
            <person name="Weissman J.S."/>
            <person name="Sherlock G."/>
        </authorList>
    </citation>
    <scope>NUCLEOTIDE SEQUENCE [LARGE SCALE GENOMIC DNA]</scope>
    <scope>GENOME REANNOTATION</scope>
    <source>
        <strain>SC5314 / ATCC MYA-2876</strain>
    </source>
</reference>
<reference key="4">
    <citation type="journal article" date="2005" name="Mol. Cell. Biol.">
        <title>Divergence of Stp1 and Stp2 transcription factors in Candida albicans places virulence factors required for proper nutrient acquisition under amino acid control.</title>
        <authorList>
            <person name="Martinez P."/>
            <person name="Ljungdahl P.O."/>
        </authorList>
    </citation>
    <scope>FUNCTION</scope>
    <scope>DISRUPTION PHENOTYPE</scope>
    <scope>INDUCTION</scope>
    <scope>PROTEOLYTIC PROCESSING</scope>
</reference>
<reference key="5">
    <citation type="journal article" date="2008" name="Mol. Microbiol.">
        <title>A transcription factor regulatory cascade controls secreted aspartic protease expression in Candida albicans.</title>
        <authorList>
            <person name="Dabas N."/>
            <person name="Morschhauser J."/>
        </authorList>
    </citation>
    <scope>FUNCTION</scope>
</reference>
<reference key="6">
    <citation type="journal article" date="2011" name="PLoS ONE">
        <title>Wild-type Drosophila melanogaster as a model host to analyze nitrogen source dependent virulence of Candida albicans.</title>
        <authorList>
            <person name="Davis M.M."/>
            <person name="Alvarez F.J."/>
            <person name="Ryman K."/>
            <person name="Holm A.A."/>
            <person name="Ljungdahl P.O."/>
            <person name="Engstrom Y."/>
        </authorList>
    </citation>
    <scope>FUNCTION</scope>
    <scope>DISRUPTION PHENOTYPE</scope>
</reference>
<organism>
    <name type="scientific">Candida albicans (strain SC5314 / ATCC MYA-2876)</name>
    <name type="common">Yeast</name>
    <dbReference type="NCBI Taxonomy" id="237561"/>
    <lineage>
        <taxon>Eukaryota</taxon>
        <taxon>Fungi</taxon>
        <taxon>Dikarya</taxon>
        <taxon>Ascomycota</taxon>
        <taxon>Saccharomycotina</taxon>
        <taxon>Pichiomycetes</taxon>
        <taxon>Debaryomycetaceae</taxon>
        <taxon>Candida/Lodderomyces clade</taxon>
        <taxon>Candida</taxon>
    </lineage>
</organism>
<protein>
    <recommendedName>
        <fullName>Transcriptional regulator STP3</fullName>
    </recommendedName>
</protein>
<feature type="propeptide" id="PRO_0000426058">
    <location>
        <begin position="1"/>
        <end status="unknown"/>
    </location>
</feature>
<feature type="chain" id="PRO_0000426059" description="Transcriptional regulator STP3">
    <location>
        <begin status="unknown"/>
        <end position="436"/>
    </location>
</feature>
<feature type="zinc finger region" description="C2H2-type" evidence="2">
    <location>
        <begin position="315"/>
        <end position="337"/>
    </location>
</feature>
<feature type="region of interest" description="Disordered" evidence="3">
    <location>
        <begin position="204"/>
        <end position="277"/>
    </location>
</feature>
<feature type="compositionally biased region" description="Low complexity" evidence="3">
    <location>
        <begin position="230"/>
        <end position="265"/>
    </location>
</feature>
<feature type="compositionally biased region" description="Basic residues" evidence="3">
    <location>
        <begin position="268"/>
        <end position="277"/>
    </location>
</feature>
<keyword id="KW-1003">Cell membrane</keyword>
<keyword id="KW-0238">DNA-binding</keyword>
<keyword id="KW-0472">Membrane</keyword>
<keyword id="KW-0479">Metal-binding</keyword>
<keyword id="KW-0539">Nucleus</keyword>
<keyword id="KW-1185">Reference proteome</keyword>
<keyword id="KW-0677">Repeat</keyword>
<keyword id="KW-0843">Virulence</keyword>
<keyword id="KW-0862">Zinc</keyword>
<keyword id="KW-0863">Zinc-finger</keyword>
<keyword id="KW-0865">Zymogen</keyword>
<comment type="function">
    <text evidence="4 5 6">Transcription factor that activates genes required for degradation of extracellular protein and uptake of peptides such as the secreted aspartyl protease SAP2 or the oligopeptide transporter OPT1. Required for virulence. Synthesized as latent cytoplasmic precursor, which, upon a signal initiated by the plasma membrane SPS amino acid sensor system (including CSY1 and CSH3), becomes proteolytically activated and relocates to the nucleus, where it induces the expression of SPS-sensor-regulated genes.</text>
</comment>
<comment type="subcellular location">
    <subcellularLocation>
        <location evidence="1">Cell membrane</location>
        <topology evidence="1">Peripheral membrane protein</topology>
        <orientation evidence="1">Cytoplasmic side</orientation>
    </subcellularLocation>
    <subcellularLocation>
        <location evidence="1">Nucleus</location>
    </subcellularLocation>
    <text evidence="1">Localizes to the cytoplasm in its unprocessed form and is targeted to the nucleus after proteolytic processing upon induction by amino acids.</text>
</comment>
<comment type="induction">
    <text evidence="4">Expression is down-regulated in presence of extracellular amino acids.</text>
</comment>
<comment type="PTM">
    <text>Activated by the amino acid-induced proteolytic removal of an N-terminal inhibitory domain.</text>
</comment>
<comment type="disruption phenotype">
    <text evidence="4 6">Impairs expression of SAP2 and OPT1. Impairs virulence in Drosophila as a host model.</text>
</comment>